<name>RIBJ_TRYCC</name>
<keyword id="KW-1003">Cell membrane</keyword>
<keyword id="KW-0325">Glycoprotein</keyword>
<keyword id="KW-0472">Membrane</keyword>
<keyword id="KW-1185">Reference proteome</keyword>
<keyword id="KW-0812">Transmembrane</keyword>
<keyword id="KW-1133">Transmembrane helix</keyword>
<keyword id="KW-0813">Transport</keyword>
<sequence length="472" mass="51218">MLPCFTRKPVDHPLGFLVALSGLLMQLMSYGIDNSYSIFSDDMHKDPSLGYPSVTTISLGNSVSLGLSPAFGVLCGFLVDRVPPRLMMAVSTLMLFAGLWLSSTFAHNVTAVTFSYCLLASISSACMLSPGAAATSSWFNRYQGLAMGINFSGGGVGSAIIPSLAGKWVVAYGWRKTFRLMSAFCAIGVVATLLSARRAPPKKEEAGPSEYDEGQERQEQGEEEQAHTDEENRNNNNSNGETTPARRGLHTHKLNPWELFLTMFSRAFLGNFFCWLIFSWAFYSLIYVAVPYVSSMGKAGTVYADISPIPTDIASTLFTFYGVFQIVGSILVGWLATGTTNEFAYVLCATIGGIFCAFLGFCRSYVAFALLLCVIGFCMAGMFAVMPALIAERLYGPNLGFYMGAVFLAGVVGGFSAPPIQAELQQRHYGNYTYVCVFMSACMTLAAAVCYITMWRDKRVRIVSAAAEAKLA</sequence>
<reference evidence="8" key="1">
    <citation type="journal article" date="2005" name="Science">
        <title>The genome sequence of Trypanosoma cruzi, etiologic agent of Chagas disease.</title>
        <authorList>
            <person name="El-Sayed N.M.A."/>
            <person name="Myler P.J."/>
            <person name="Bartholomeu D.C."/>
            <person name="Nilsson D."/>
            <person name="Aggarwal G."/>
            <person name="Tran A.-N."/>
            <person name="Ghedin E."/>
            <person name="Worthey E.A."/>
            <person name="Delcher A.L."/>
            <person name="Blandin G."/>
            <person name="Westenberger S.J."/>
            <person name="Caler E."/>
            <person name="Cerqueira G.C."/>
            <person name="Branche C."/>
            <person name="Haas B."/>
            <person name="Anupama A."/>
            <person name="Arner E."/>
            <person name="Aslund L."/>
            <person name="Attipoe P."/>
            <person name="Bontempi E."/>
            <person name="Bringaud F."/>
            <person name="Burton P."/>
            <person name="Cadag E."/>
            <person name="Campbell D.A."/>
            <person name="Carrington M."/>
            <person name="Crabtree J."/>
            <person name="Darban H."/>
            <person name="da Silveira J.F."/>
            <person name="de Jong P."/>
            <person name="Edwards K."/>
            <person name="Englund P.T."/>
            <person name="Fazelina G."/>
            <person name="Feldblyum T."/>
            <person name="Ferella M."/>
            <person name="Frasch A.C."/>
            <person name="Gull K."/>
            <person name="Horn D."/>
            <person name="Hou L."/>
            <person name="Huang Y."/>
            <person name="Kindlund E."/>
            <person name="Klingbeil M."/>
            <person name="Kluge S."/>
            <person name="Koo H."/>
            <person name="Lacerda D."/>
            <person name="Levin M.J."/>
            <person name="Lorenzi H."/>
            <person name="Louie T."/>
            <person name="Machado C.R."/>
            <person name="McCulloch R."/>
            <person name="McKenna A."/>
            <person name="Mizuno Y."/>
            <person name="Mottram J.C."/>
            <person name="Nelson S."/>
            <person name="Ochaya S."/>
            <person name="Osoegawa K."/>
            <person name="Pai G."/>
            <person name="Parsons M."/>
            <person name="Pentony M."/>
            <person name="Pettersson U."/>
            <person name="Pop M."/>
            <person name="Ramirez J.L."/>
            <person name="Rinta J."/>
            <person name="Robertson L."/>
            <person name="Salzberg S.L."/>
            <person name="Sanchez D.O."/>
            <person name="Seyler A."/>
            <person name="Sharma R."/>
            <person name="Shetty J."/>
            <person name="Simpson A.J."/>
            <person name="Sisk E."/>
            <person name="Tammi M.T."/>
            <person name="Tarleton R."/>
            <person name="Teixeira S."/>
            <person name="Van Aken S."/>
            <person name="Vogt C."/>
            <person name="Ward P.N."/>
            <person name="Wickstead B."/>
            <person name="Wortman J."/>
            <person name="White O."/>
            <person name="Fraser C.M."/>
            <person name="Stuart K.D."/>
            <person name="Andersson B."/>
        </authorList>
    </citation>
    <scope>NUCLEOTIDE SEQUENCE [LARGE SCALE GENOMIC DNA]</scope>
    <source>
        <strain evidence="8">CL Brener</strain>
    </source>
</reference>
<reference evidence="6" key="2">
    <citation type="journal article" date="2017" name="PLoS Negl. Trop. Dis.">
        <title>The superfamily keeps growing: Identification in trypanosomatids of RibJ, the first riboflavin transporter family in protists.</title>
        <authorList>
            <person name="Balcazar D.E."/>
            <person name="Vanrell M.C."/>
            <person name="Romano P.S."/>
            <person name="Pereira C.A."/>
            <person name="Goldbaum F.A."/>
            <person name="Bonomi H.R."/>
            <person name="Carrillo C."/>
        </authorList>
    </citation>
    <scope>FUNCTION</scope>
</reference>
<organism evidence="8">
    <name type="scientific">Trypanosoma cruzi (strain CL Brener)</name>
    <dbReference type="NCBI Taxonomy" id="353153"/>
    <lineage>
        <taxon>Eukaryota</taxon>
        <taxon>Discoba</taxon>
        <taxon>Euglenozoa</taxon>
        <taxon>Kinetoplastea</taxon>
        <taxon>Metakinetoplastina</taxon>
        <taxon>Trypanosomatida</taxon>
        <taxon>Trypanosomatidae</taxon>
        <taxon>Trypanosoma</taxon>
        <taxon>Schizotrypanum</taxon>
    </lineage>
</organism>
<gene>
    <name evidence="5" type="primary">RibJ</name>
    <name evidence="7" type="ORF">Tc00.1047053509885.70</name>
</gene>
<protein>
    <recommendedName>
        <fullName evidence="6">Riboflavin transporter RibJ</fullName>
    </recommendedName>
    <alternativeName>
        <fullName evidence="5">Riboflavin/flavin transporter</fullName>
    </alternativeName>
</protein>
<accession>Q4D3E8</accession>
<dbReference type="EMBL" id="AAHK01001096">
    <property type="protein sequence ID" value="EAN87055.1"/>
    <property type="molecule type" value="Genomic_DNA"/>
</dbReference>
<dbReference type="RefSeq" id="XP_808906.1">
    <property type="nucleotide sequence ID" value="XM_803813.1"/>
</dbReference>
<dbReference type="SMR" id="Q4D3E8"/>
<dbReference type="STRING" id="353153.Q4D3E8"/>
<dbReference type="GlyCosmos" id="Q4D3E8">
    <property type="glycosylation" value="2 sites, No reported glycans"/>
</dbReference>
<dbReference type="PaxDb" id="353153-Q4D3E8"/>
<dbReference type="EnsemblProtists" id="EAN87055">
    <property type="protein sequence ID" value="EAN87055"/>
    <property type="gene ID" value="Tc00.1047053509885.70"/>
</dbReference>
<dbReference type="GeneID" id="3539434"/>
<dbReference type="KEGG" id="tcr:509885.70"/>
<dbReference type="eggNOG" id="KOG2504">
    <property type="taxonomic scope" value="Eukaryota"/>
</dbReference>
<dbReference type="InParanoid" id="Q4D3E8"/>
<dbReference type="OMA" id="MGVAPMT"/>
<dbReference type="Proteomes" id="UP000002296">
    <property type="component" value="Unassembled WGS sequence"/>
</dbReference>
<dbReference type="GO" id="GO:0005886">
    <property type="term" value="C:plasma membrane"/>
    <property type="evidence" value="ECO:0007669"/>
    <property type="project" value="UniProtKB-SubCell"/>
</dbReference>
<dbReference type="GO" id="GO:0032217">
    <property type="term" value="F:riboflavin transmembrane transporter activity"/>
    <property type="evidence" value="ECO:0000314"/>
    <property type="project" value="UniProtKB"/>
</dbReference>
<dbReference type="GO" id="GO:0032218">
    <property type="term" value="P:riboflavin transport"/>
    <property type="evidence" value="ECO:0000314"/>
    <property type="project" value="UniProtKB"/>
</dbReference>
<dbReference type="FunFam" id="1.20.1250.20:FF:001027">
    <property type="entry name" value="Riboflavin transporter RibJ"/>
    <property type="match status" value="1"/>
</dbReference>
<dbReference type="FunFam" id="1.20.1250.20:FF:001047">
    <property type="entry name" value="Riboflavin transporter RibJ"/>
    <property type="match status" value="1"/>
</dbReference>
<dbReference type="Gene3D" id="1.20.1250.20">
    <property type="entry name" value="MFS general substrate transporter like domains"/>
    <property type="match status" value="2"/>
</dbReference>
<dbReference type="InterPro" id="IPR011701">
    <property type="entry name" value="MFS"/>
</dbReference>
<dbReference type="InterPro" id="IPR020846">
    <property type="entry name" value="MFS_dom"/>
</dbReference>
<dbReference type="InterPro" id="IPR052983">
    <property type="entry name" value="MFS_Riboflavin_Transporter"/>
</dbReference>
<dbReference type="InterPro" id="IPR036259">
    <property type="entry name" value="MFS_trans_sf"/>
</dbReference>
<dbReference type="PANTHER" id="PTHR43385">
    <property type="entry name" value="RIBOFLAVIN TRANSPORTER RIBJ"/>
    <property type="match status" value="1"/>
</dbReference>
<dbReference type="PANTHER" id="PTHR43385:SF1">
    <property type="entry name" value="RIBOFLAVIN TRANSPORTER RIBJ"/>
    <property type="match status" value="1"/>
</dbReference>
<dbReference type="Pfam" id="PF07690">
    <property type="entry name" value="MFS_1"/>
    <property type="match status" value="2"/>
</dbReference>
<dbReference type="SUPFAM" id="SSF103473">
    <property type="entry name" value="MFS general substrate transporter"/>
    <property type="match status" value="1"/>
</dbReference>
<dbReference type="PROSITE" id="PS50850">
    <property type="entry name" value="MFS"/>
    <property type="match status" value="1"/>
</dbReference>
<proteinExistence type="inferred from homology"/>
<feature type="chain" id="PRO_0000442705" description="Riboflavin transporter RibJ">
    <location>
        <begin position="1"/>
        <end position="472"/>
    </location>
</feature>
<feature type="topological domain" description="Cytoplasmic" evidence="6">
    <location>
        <begin position="1"/>
        <end position="11"/>
    </location>
</feature>
<feature type="transmembrane region" description="Helical" evidence="1">
    <location>
        <begin position="12"/>
        <end position="32"/>
    </location>
</feature>
<feature type="topological domain" description="Extracellular" evidence="6">
    <location>
        <begin position="33"/>
        <end position="58"/>
    </location>
</feature>
<feature type="transmembrane region" description="Helical" evidence="1">
    <location>
        <begin position="59"/>
        <end position="79"/>
    </location>
</feature>
<feature type="topological domain" description="Cytoplasmic" evidence="6">
    <location>
        <begin position="80"/>
        <end position="85"/>
    </location>
</feature>
<feature type="transmembrane region" description="Helical" evidence="1">
    <location>
        <begin position="86"/>
        <end position="106"/>
    </location>
</feature>
<feature type="topological domain" description="Extracellular" evidence="6">
    <location>
        <begin position="107"/>
        <end position="108"/>
    </location>
</feature>
<feature type="transmembrane region" description="Helical" evidence="1">
    <location>
        <begin position="109"/>
        <end position="129"/>
    </location>
</feature>
<feature type="topological domain" description="Cytoplasmic" evidence="6">
    <location>
        <begin position="130"/>
        <end position="144"/>
    </location>
</feature>
<feature type="transmembrane region" description="Helical" evidence="1">
    <location>
        <begin position="145"/>
        <end position="165"/>
    </location>
</feature>
<feature type="topological domain" description="Extracellular" evidence="6">
    <location>
        <begin position="166"/>
        <end position="179"/>
    </location>
</feature>
<feature type="transmembrane region" description="Helical" evidence="1">
    <location>
        <begin position="180"/>
        <end position="196"/>
    </location>
</feature>
<feature type="topological domain" description="Cytoplasmic" evidence="6">
    <location>
        <begin position="197"/>
        <end position="271"/>
    </location>
</feature>
<feature type="transmembrane region" description="Helical" evidence="1">
    <location>
        <begin position="272"/>
        <end position="292"/>
    </location>
</feature>
<feature type="topological domain" description="Extracellular" evidence="6">
    <location>
        <begin position="293"/>
        <end position="315"/>
    </location>
</feature>
<feature type="transmembrane region" description="Helical" evidence="1">
    <location>
        <begin position="316"/>
        <end position="336"/>
    </location>
</feature>
<feature type="topological domain" description="Cytoplasmic" evidence="6">
    <location>
        <begin position="337"/>
        <end position="341"/>
    </location>
</feature>
<feature type="transmembrane region" description="Helical" evidence="1">
    <location>
        <begin position="342"/>
        <end position="362"/>
    </location>
</feature>
<feature type="topological domain" description="Extracellular" evidence="6">
    <location>
        <begin position="363"/>
        <end position="365"/>
    </location>
</feature>
<feature type="transmembrane region" description="Helical" evidence="1">
    <location>
        <begin position="366"/>
        <end position="386"/>
    </location>
</feature>
<feature type="topological domain" description="Cytoplasmic" evidence="6">
    <location>
        <begin position="387"/>
        <end position="399"/>
    </location>
</feature>
<feature type="transmembrane region" description="Helical" evidence="1">
    <location>
        <begin position="400"/>
        <end position="420"/>
    </location>
</feature>
<feature type="topological domain" description="Extracellular" evidence="6">
    <location>
        <begin position="421"/>
        <end position="434"/>
    </location>
</feature>
<feature type="transmembrane region" description="Helical" evidence="1">
    <location>
        <begin position="435"/>
        <end position="455"/>
    </location>
</feature>
<feature type="topological domain" description="Cytoplasmic" evidence="6">
    <location>
        <begin position="456"/>
        <end position="472"/>
    </location>
</feature>
<feature type="region of interest" description="Disordered" evidence="3">
    <location>
        <begin position="200"/>
        <end position="248"/>
    </location>
</feature>
<feature type="compositionally biased region" description="Basic and acidic residues" evidence="3">
    <location>
        <begin position="214"/>
        <end position="233"/>
    </location>
</feature>
<feature type="glycosylation site" description="N-linked (GlcNAc...) asparagine" evidence="2">
    <location>
        <position position="108"/>
    </location>
</feature>
<feature type="glycosylation site" description="N-linked (GlcNAc...) asparagine" evidence="2">
    <location>
        <position position="431"/>
    </location>
</feature>
<evidence type="ECO:0000255" key="1"/>
<evidence type="ECO:0000255" key="2">
    <source>
        <dbReference type="PROSITE-ProRule" id="PRU00498"/>
    </source>
</evidence>
<evidence type="ECO:0000256" key="3">
    <source>
        <dbReference type="SAM" id="MobiDB-lite"/>
    </source>
</evidence>
<evidence type="ECO:0000269" key="4">
    <source>
    </source>
</evidence>
<evidence type="ECO:0000303" key="5">
    <source>
    </source>
</evidence>
<evidence type="ECO:0000305" key="6"/>
<evidence type="ECO:0000312" key="7">
    <source>
        <dbReference type="EMBL" id="EAN87055.1"/>
    </source>
</evidence>
<evidence type="ECO:0000312" key="8">
    <source>
        <dbReference type="Proteomes" id="UP000002296"/>
    </source>
</evidence>
<comment type="function">
    <text evidence="4">Transporter involved in riboflavin (vitamin B2) uptake. Also transports FMN and FAD.</text>
</comment>
<comment type="subcellular location">
    <subcellularLocation>
        <location evidence="6">Cell membrane</location>
        <topology evidence="1">Multi-pass membrane protein</topology>
    </subcellularLocation>
</comment>
<comment type="similarity">
    <text evidence="6">Belongs to the major facilitator superfamily. RibJ family.</text>
</comment>